<protein>
    <recommendedName>
        <fullName evidence="1">DNA ligase</fullName>
        <ecNumber evidence="1">6.5.1.2</ecNumber>
    </recommendedName>
    <alternativeName>
        <fullName evidence="1">Polydeoxyribonucleotide synthase [NAD(+)]</fullName>
    </alternativeName>
</protein>
<proteinExistence type="inferred from homology"/>
<name>DNLJ_RHIJ3</name>
<keyword id="KW-0227">DNA damage</keyword>
<keyword id="KW-0234">DNA repair</keyword>
<keyword id="KW-0235">DNA replication</keyword>
<keyword id="KW-0436">Ligase</keyword>
<keyword id="KW-0460">Magnesium</keyword>
<keyword id="KW-0464">Manganese</keyword>
<keyword id="KW-0479">Metal-binding</keyword>
<keyword id="KW-0520">NAD</keyword>
<keyword id="KW-0862">Zinc</keyword>
<organism>
    <name type="scientific">Rhizobium johnstonii (strain DSM 114642 / LMG 32736 / 3841)</name>
    <name type="common">Rhizobium leguminosarum bv. viciae</name>
    <dbReference type="NCBI Taxonomy" id="216596"/>
    <lineage>
        <taxon>Bacteria</taxon>
        <taxon>Pseudomonadati</taxon>
        <taxon>Pseudomonadota</taxon>
        <taxon>Alphaproteobacteria</taxon>
        <taxon>Hyphomicrobiales</taxon>
        <taxon>Rhizobiaceae</taxon>
        <taxon>Rhizobium/Agrobacterium group</taxon>
        <taxon>Rhizobium</taxon>
        <taxon>Rhizobium johnstonii</taxon>
    </lineage>
</organism>
<reference key="1">
    <citation type="journal article" date="2006" name="Genome Biol.">
        <title>The genome of Rhizobium leguminosarum has recognizable core and accessory components.</title>
        <authorList>
            <person name="Young J.P.W."/>
            <person name="Crossman L.C."/>
            <person name="Johnston A.W.B."/>
            <person name="Thomson N.R."/>
            <person name="Ghazoui Z.F."/>
            <person name="Hull K.H."/>
            <person name="Wexler M."/>
            <person name="Curson A.R.J."/>
            <person name="Todd J.D."/>
            <person name="Poole P.S."/>
            <person name="Mauchline T.H."/>
            <person name="East A.K."/>
            <person name="Quail M.A."/>
            <person name="Churcher C."/>
            <person name="Arrowsmith C."/>
            <person name="Cherevach I."/>
            <person name="Chillingworth T."/>
            <person name="Clarke K."/>
            <person name="Cronin A."/>
            <person name="Davis P."/>
            <person name="Fraser A."/>
            <person name="Hance Z."/>
            <person name="Hauser H."/>
            <person name="Jagels K."/>
            <person name="Moule S."/>
            <person name="Mungall K."/>
            <person name="Norbertczak H."/>
            <person name="Rabbinowitsch E."/>
            <person name="Sanders M."/>
            <person name="Simmonds M."/>
            <person name="Whitehead S."/>
            <person name="Parkhill J."/>
        </authorList>
    </citation>
    <scope>NUCLEOTIDE SEQUENCE [LARGE SCALE GENOMIC DNA]</scope>
    <source>
        <strain>DSM 114642 / LMG 32736 / 3841</strain>
    </source>
</reference>
<feature type="chain" id="PRO_0000313391" description="DNA ligase">
    <location>
        <begin position="1"/>
        <end position="718"/>
    </location>
</feature>
<feature type="domain" description="BRCT" evidence="1">
    <location>
        <begin position="640"/>
        <end position="718"/>
    </location>
</feature>
<feature type="active site" description="N6-AMP-lysine intermediate" evidence="1">
    <location>
        <position position="129"/>
    </location>
</feature>
<feature type="binding site" evidence="1">
    <location>
        <begin position="44"/>
        <end position="48"/>
    </location>
    <ligand>
        <name>NAD(+)</name>
        <dbReference type="ChEBI" id="CHEBI:57540"/>
    </ligand>
</feature>
<feature type="binding site" evidence="1">
    <location>
        <begin position="93"/>
        <end position="94"/>
    </location>
    <ligand>
        <name>NAD(+)</name>
        <dbReference type="ChEBI" id="CHEBI:57540"/>
    </ligand>
</feature>
<feature type="binding site" evidence="1">
    <location>
        <position position="127"/>
    </location>
    <ligand>
        <name>NAD(+)</name>
        <dbReference type="ChEBI" id="CHEBI:57540"/>
    </ligand>
</feature>
<feature type="binding site" evidence="1">
    <location>
        <position position="150"/>
    </location>
    <ligand>
        <name>NAD(+)</name>
        <dbReference type="ChEBI" id="CHEBI:57540"/>
    </ligand>
</feature>
<feature type="binding site" evidence="1">
    <location>
        <position position="186"/>
    </location>
    <ligand>
        <name>NAD(+)</name>
        <dbReference type="ChEBI" id="CHEBI:57540"/>
    </ligand>
</feature>
<feature type="binding site" evidence="1">
    <location>
        <position position="302"/>
    </location>
    <ligand>
        <name>NAD(+)</name>
        <dbReference type="ChEBI" id="CHEBI:57540"/>
    </ligand>
</feature>
<feature type="binding site" evidence="1">
    <location>
        <position position="326"/>
    </location>
    <ligand>
        <name>NAD(+)</name>
        <dbReference type="ChEBI" id="CHEBI:57540"/>
    </ligand>
</feature>
<feature type="binding site" evidence="1">
    <location>
        <position position="432"/>
    </location>
    <ligand>
        <name>Zn(2+)</name>
        <dbReference type="ChEBI" id="CHEBI:29105"/>
    </ligand>
</feature>
<feature type="binding site" evidence="1">
    <location>
        <position position="435"/>
    </location>
    <ligand>
        <name>Zn(2+)</name>
        <dbReference type="ChEBI" id="CHEBI:29105"/>
    </ligand>
</feature>
<feature type="binding site" evidence="1">
    <location>
        <position position="456"/>
    </location>
    <ligand>
        <name>Zn(2+)</name>
        <dbReference type="ChEBI" id="CHEBI:29105"/>
    </ligand>
</feature>
<feature type="binding site" evidence="1">
    <location>
        <position position="462"/>
    </location>
    <ligand>
        <name>Zn(2+)</name>
        <dbReference type="ChEBI" id="CHEBI:29105"/>
    </ligand>
</feature>
<sequence>MPTEGSTVDTLTIEEAAAELARLAKEIAHHDALYHGKDQPEISDADYDALKRRNDALEVRFPELIREDSPSRHVGAAPSVTFSPVVHARPMLSLDNTFSQEDVQDFVAGVYRFLGRLPDQSIAFTAEPKIDGLSMSIRYENGRLVTAATRGDGTTGENVTANIRTIAEIPNELPKGVPAVVEIRGEVYMAKSDFLALNRQMEAEGKQTYVNPRNTAAGSLRQLDAKVTASRKLKFFAYAWGEMSEMPADTQFGMVQTFKDWGFPVNPLMKRLNSVADILAHYDEIGLERPDLDYDIDGVVYKVDSLELQARLGFRSRSPRWATAHKFPAEQAFTIVENIDIQVGRTGALTPVARLTPITVGGVVVTNATLHNADYIQGIGNSGERIRDDEHDIRIGDTVIVQRAGDVIPQVLDVVMEKRPAEARPYEFPKTCPVCGSHAVRERHEKTGKLDSVTRCTGGFICRAQATEHLKHFVSRNAFDIEGLGSKQIDFFFENEDASLQIRTAPDIFTLEKRQQQSLTKLENIDGFGKVSVGKLYGAIDERRSIALHRFIYALGIRHVGETTAKLLARSYGTYEAFETAMREAEALSGDAWNDLNAIEGIGEVVARAIVEFYKEPRNVEVITRLLEEVTPEEAEQPKTAGSPVAGKTVVFTGSLEKLTRDEAKARAESLGAKVAGSVSKKTDIVVAGPGAGSKLDKARELGVQTMDEDQWLALISG</sequence>
<comment type="function">
    <text evidence="1">DNA ligase that catalyzes the formation of phosphodiester linkages between 5'-phosphoryl and 3'-hydroxyl groups in double-stranded DNA using NAD as a coenzyme and as the energy source for the reaction. It is essential for DNA replication and repair of damaged DNA.</text>
</comment>
<comment type="catalytic activity">
    <reaction evidence="1">
        <text>NAD(+) + (deoxyribonucleotide)n-3'-hydroxyl + 5'-phospho-(deoxyribonucleotide)m = (deoxyribonucleotide)n+m + AMP + beta-nicotinamide D-nucleotide.</text>
        <dbReference type="EC" id="6.5.1.2"/>
    </reaction>
</comment>
<comment type="cofactor">
    <cofactor evidence="1">
        <name>Mg(2+)</name>
        <dbReference type="ChEBI" id="CHEBI:18420"/>
    </cofactor>
    <cofactor evidence="1">
        <name>Mn(2+)</name>
        <dbReference type="ChEBI" id="CHEBI:29035"/>
    </cofactor>
</comment>
<comment type="similarity">
    <text evidence="1">Belongs to the NAD-dependent DNA ligase family. LigA subfamily.</text>
</comment>
<dbReference type="EC" id="6.5.1.2" evidence="1"/>
<dbReference type="EMBL" id="AM236080">
    <property type="protein sequence ID" value="CAK08780.1"/>
    <property type="molecule type" value="Genomic_DNA"/>
</dbReference>
<dbReference type="RefSeq" id="WP_011652785.1">
    <property type="nucleotide sequence ID" value="NC_008380.1"/>
</dbReference>
<dbReference type="SMR" id="Q1ME47"/>
<dbReference type="EnsemblBacteria" id="CAK08780">
    <property type="protein sequence ID" value="CAK08780"/>
    <property type="gene ID" value="RL3293"/>
</dbReference>
<dbReference type="KEGG" id="rle:RL3293"/>
<dbReference type="eggNOG" id="COG0272">
    <property type="taxonomic scope" value="Bacteria"/>
</dbReference>
<dbReference type="HOGENOM" id="CLU_007764_2_0_5"/>
<dbReference type="Proteomes" id="UP000006575">
    <property type="component" value="Chromosome"/>
</dbReference>
<dbReference type="GO" id="GO:0005829">
    <property type="term" value="C:cytosol"/>
    <property type="evidence" value="ECO:0007669"/>
    <property type="project" value="TreeGrafter"/>
</dbReference>
<dbReference type="GO" id="GO:0003677">
    <property type="term" value="F:DNA binding"/>
    <property type="evidence" value="ECO:0007669"/>
    <property type="project" value="InterPro"/>
</dbReference>
<dbReference type="GO" id="GO:0003911">
    <property type="term" value="F:DNA ligase (NAD+) activity"/>
    <property type="evidence" value="ECO:0007669"/>
    <property type="project" value="UniProtKB-UniRule"/>
</dbReference>
<dbReference type="GO" id="GO:0046872">
    <property type="term" value="F:metal ion binding"/>
    <property type="evidence" value="ECO:0007669"/>
    <property type="project" value="UniProtKB-KW"/>
</dbReference>
<dbReference type="GO" id="GO:0006281">
    <property type="term" value="P:DNA repair"/>
    <property type="evidence" value="ECO:0007669"/>
    <property type="project" value="UniProtKB-KW"/>
</dbReference>
<dbReference type="GO" id="GO:0006260">
    <property type="term" value="P:DNA replication"/>
    <property type="evidence" value="ECO:0007669"/>
    <property type="project" value="UniProtKB-KW"/>
</dbReference>
<dbReference type="CDD" id="cd17748">
    <property type="entry name" value="BRCT_DNA_ligase_like"/>
    <property type="match status" value="1"/>
</dbReference>
<dbReference type="CDD" id="cd00114">
    <property type="entry name" value="LIGANc"/>
    <property type="match status" value="1"/>
</dbReference>
<dbReference type="FunFam" id="3.30.470.30:FF:000001">
    <property type="entry name" value="DNA ligase"/>
    <property type="match status" value="1"/>
</dbReference>
<dbReference type="Gene3D" id="6.20.10.30">
    <property type="match status" value="1"/>
</dbReference>
<dbReference type="Gene3D" id="1.10.150.20">
    <property type="entry name" value="5' to 3' exonuclease, C-terminal subdomain"/>
    <property type="match status" value="2"/>
</dbReference>
<dbReference type="Gene3D" id="3.40.50.10190">
    <property type="entry name" value="BRCT domain"/>
    <property type="match status" value="1"/>
</dbReference>
<dbReference type="Gene3D" id="3.30.470.30">
    <property type="entry name" value="DNA ligase/mRNA capping enzyme"/>
    <property type="match status" value="1"/>
</dbReference>
<dbReference type="Gene3D" id="1.10.287.610">
    <property type="entry name" value="Helix hairpin bin"/>
    <property type="match status" value="1"/>
</dbReference>
<dbReference type="Gene3D" id="2.40.50.140">
    <property type="entry name" value="Nucleic acid-binding proteins"/>
    <property type="match status" value="1"/>
</dbReference>
<dbReference type="HAMAP" id="MF_01588">
    <property type="entry name" value="DNA_ligase_A"/>
    <property type="match status" value="1"/>
</dbReference>
<dbReference type="InterPro" id="IPR001357">
    <property type="entry name" value="BRCT_dom"/>
</dbReference>
<dbReference type="InterPro" id="IPR036420">
    <property type="entry name" value="BRCT_dom_sf"/>
</dbReference>
<dbReference type="InterPro" id="IPR041663">
    <property type="entry name" value="DisA/LigA_HHH"/>
</dbReference>
<dbReference type="InterPro" id="IPR001679">
    <property type="entry name" value="DNA_ligase"/>
</dbReference>
<dbReference type="InterPro" id="IPR018239">
    <property type="entry name" value="DNA_ligase_AS"/>
</dbReference>
<dbReference type="InterPro" id="IPR033136">
    <property type="entry name" value="DNA_ligase_CS"/>
</dbReference>
<dbReference type="InterPro" id="IPR013839">
    <property type="entry name" value="DNAligase_adenylation"/>
</dbReference>
<dbReference type="InterPro" id="IPR013840">
    <property type="entry name" value="DNAligase_N"/>
</dbReference>
<dbReference type="InterPro" id="IPR003583">
    <property type="entry name" value="Hlx-hairpin-Hlx_DNA-bd_motif"/>
</dbReference>
<dbReference type="InterPro" id="IPR012340">
    <property type="entry name" value="NA-bd_OB-fold"/>
</dbReference>
<dbReference type="InterPro" id="IPR004150">
    <property type="entry name" value="NAD_DNA_ligase_OB"/>
</dbReference>
<dbReference type="InterPro" id="IPR010994">
    <property type="entry name" value="RuvA_2-like"/>
</dbReference>
<dbReference type="NCBIfam" id="TIGR00575">
    <property type="entry name" value="dnlj"/>
    <property type="match status" value="1"/>
</dbReference>
<dbReference type="NCBIfam" id="NF005932">
    <property type="entry name" value="PRK07956.1"/>
    <property type="match status" value="1"/>
</dbReference>
<dbReference type="PANTHER" id="PTHR23389">
    <property type="entry name" value="CHROMOSOME TRANSMISSION FIDELITY FACTOR 18"/>
    <property type="match status" value="1"/>
</dbReference>
<dbReference type="PANTHER" id="PTHR23389:SF9">
    <property type="entry name" value="DNA LIGASE"/>
    <property type="match status" value="1"/>
</dbReference>
<dbReference type="Pfam" id="PF00533">
    <property type="entry name" value="BRCT"/>
    <property type="match status" value="1"/>
</dbReference>
<dbReference type="Pfam" id="PF01653">
    <property type="entry name" value="DNA_ligase_aden"/>
    <property type="match status" value="1"/>
</dbReference>
<dbReference type="Pfam" id="PF03120">
    <property type="entry name" value="DNA_ligase_OB"/>
    <property type="match status" value="1"/>
</dbReference>
<dbReference type="Pfam" id="PF12826">
    <property type="entry name" value="HHH_2"/>
    <property type="match status" value="1"/>
</dbReference>
<dbReference type="PIRSF" id="PIRSF001604">
    <property type="entry name" value="LigA"/>
    <property type="match status" value="1"/>
</dbReference>
<dbReference type="SMART" id="SM00292">
    <property type="entry name" value="BRCT"/>
    <property type="match status" value="1"/>
</dbReference>
<dbReference type="SMART" id="SM00278">
    <property type="entry name" value="HhH1"/>
    <property type="match status" value="3"/>
</dbReference>
<dbReference type="SMART" id="SM00532">
    <property type="entry name" value="LIGANc"/>
    <property type="match status" value="1"/>
</dbReference>
<dbReference type="SUPFAM" id="SSF52113">
    <property type="entry name" value="BRCT domain"/>
    <property type="match status" value="1"/>
</dbReference>
<dbReference type="SUPFAM" id="SSF56091">
    <property type="entry name" value="DNA ligase/mRNA capping enzyme, catalytic domain"/>
    <property type="match status" value="1"/>
</dbReference>
<dbReference type="SUPFAM" id="SSF50249">
    <property type="entry name" value="Nucleic acid-binding proteins"/>
    <property type="match status" value="1"/>
</dbReference>
<dbReference type="SUPFAM" id="SSF47781">
    <property type="entry name" value="RuvA domain 2-like"/>
    <property type="match status" value="1"/>
</dbReference>
<dbReference type="PROSITE" id="PS50172">
    <property type="entry name" value="BRCT"/>
    <property type="match status" value="1"/>
</dbReference>
<dbReference type="PROSITE" id="PS01055">
    <property type="entry name" value="DNA_LIGASE_N1"/>
    <property type="match status" value="1"/>
</dbReference>
<dbReference type="PROSITE" id="PS01056">
    <property type="entry name" value="DNA_LIGASE_N2"/>
    <property type="match status" value="1"/>
</dbReference>
<gene>
    <name evidence="1" type="primary">ligA</name>
    <name type="ordered locus">RL3293</name>
</gene>
<evidence type="ECO:0000255" key="1">
    <source>
        <dbReference type="HAMAP-Rule" id="MF_01588"/>
    </source>
</evidence>
<accession>Q1ME47</accession>